<reference key="1">
    <citation type="journal article" date="2004" name="Proc. Natl. Acad. Sci. U.S.A.">
        <title>The louse-borne human pathogen Bartonella quintana is a genomic derivative of the zoonotic agent Bartonella henselae.</title>
        <authorList>
            <person name="Alsmark U.C.M."/>
            <person name="Frank A.C."/>
            <person name="Karlberg E.O."/>
            <person name="Legault B.-A."/>
            <person name="Ardell D.H."/>
            <person name="Canbaeck B."/>
            <person name="Eriksson A.-S."/>
            <person name="Naeslund A.K."/>
            <person name="Handley S.A."/>
            <person name="Huvet M."/>
            <person name="La Scola B."/>
            <person name="Holmberg M."/>
            <person name="Andersson S.G.E."/>
        </authorList>
    </citation>
    <scope>NUCLEOTIDE SEQUENCE [LARGE SCALE GENOMIC DNA]</scope>
    <source>
        <strain>Toulouse</strain>
    </source>
</reference>
<accession>Q6FZP6</accession>
<feature type="chain" id="PRO_0000119512" description="Glutamate--tRNA ligase 1">
    <location>
        <begin position="1"/>
        <end position="459"/>
    </location>
</feature>
<feature type="short sequence motif" description="'HIGH' region" evidence="1">
    <location>
        <begin position="8"/>
        <end position="18"/>
    </location>
</feature>
<feature type="short sequence motif" description="'KMSKS' region" evidence="1">
    <location>
        <begin position="249"/>
        <end position="253"/>
    </location>
</feature>
<feature type="binding site" evidence="1">
    <location>
        <position position="252"/>
    </location>
    <ligand>
        <name>ATP</name>
        <dbReference type="ChEBI" id="CHEBI:30616"/>
    </ligand>
</feature>
<evidence type="ECO:0000255" key="1">
    <source>
        <dbReference type="HAMAP-Rule" id="MF_00022"/>
    </source>
</evidence>
<comment type="function">
    <text evidence="1">Catalyzes the attachment of glutamate to tRNA(Glu) in a two-step reaction: glutamate is first activated by ATP to form Glu-AMP and then transferred to the acceptor end of tRNA(Glu).</text>
</comment>
<comment type="catalytic activity">
    <reaction evidence="1">
        <text>tRNA(Glu) + L-glutamate + ATP = L-glutamyl-tRNA(Glu) + AMP + diphosphate</text>
        <dbReference type="Rhea" id="RHEA:23540"/>
        <dbReference type="Rhea" id="RHEA-COMP:9663"/>
        <dbReference type="Rhea" id="RHEA-COMP:9680"/>
        <dbReference type="ChEBI" id="CHEBI:29985"/>
        <dbReference type="ChEBI" id="CHEBI:30616"/>
        <dbReference type="ChEBI" id="CHEBI:33019"/>
        <dbReference type="ChEBI" id="CHEBI:78442"/>
        <dbReference type="ChEBI" id="CHEBI:78520"/>
        <dbReference type="ChEBI" id="CHEBI:456215"/>
        <dbReference type="EC" id="6.1.1.17"/>
    </reaction>
</comment>
<comment type="subunit">
    <text evidence="1">Monomer.</text>
</comment>
<comment type="subcellular location">
    <subcellularLocation>
        <location evidence="1">Cytoplasm</location>
    </subcellularLocation>
</comment>
<comment type="similarity">
    <text evidence="1">Belongs to the class-I aminoacyl-tRNA synthetase family. Glutamate--tRNA ligase type 1 subfamily.</text>
</comment>
<proteinExistence type="inferred from homology"/>
<dbReference type="EC" id="6.1.1.17" evidence="1"/>
<dbReference type="EMBL" id="BX897700">
    <property type="protein sequence ID" value="CAF26166.1"/>
    <property type="molecule type" value="Genomic_DNA"/>
</dbReference>
<dbReference type="SMR" id="Q6FZP6"/>
<dbReference type="KEGG" id="bqu:BQ06770"/>
<dbReference type="eggNOG" id="COG0008">
    <property type="taxonomic scope" value="Bacteria"/>
</dbReference>
<dbReference type="eggNOG" id="COG1384">
    <property type="taxonomic scope" value="Bacteria"/>
</dbReference>
<dbReference type="HOGENOM" id="CLU_015768_6_1_5"/>
<dbReference type="OrthoDB" id="9807503at2"/>
<dbReference type="Proteomes" id="UP000000597">
    <property type="component" value="Chromosome"/>
</dbReference>
<dbReference type="GO" id="GO:0005737">
    <property type="term" value="C:cytoplasm"/>
    <property type="evidence" value="ECO:0007669"/>
    <property type="project" value="UniProtKB-SubCell"/>
</dbReference>
<dbReference type="GO" id="GO:0005524">
    <property type="term" value="F:ATP binding"/>
    <property type="evidence" value="ECO:0007669"/>
    <property type="project" value="UniProtKB-UniRule"/>
</dbReference>
<dbReference type="GO" id="GO:0004818">
    <property type="term" value="F:glutamate-tRNA ligase activity"/>
    <property type="evidence" value="ECO:0007669"/>
    <property type="project" value="UniProtKB-UniRule"/>
</dbReference>
<dbReference type="GO" id="GO:0000049">
    <property type="term" value="F:tRNA binding"/>
    <property type="evidence" value="ECO:0007669"/>
    <property type="project" value="InterPro"/>
</dbReference>
<dbReference type="GO" id="GO:0006424">
    <property type="term" value="P:glutamyl-tRNA aminoacylation"/>
    <property type="evidence" value="ECO:0007669"/>
    <property type="project" value="UniProtKB-UniRule"/>
</dbReference>
<dbReference type="Gene3D" id="1.10.10.350">
    <property type="match status" value="1"/>
</dbReference>
<dbReference type="Gene3D" id="3.40.50.620">
    <property type="entry name" value="HUPs"/>
    <property type="match status" value="1"/>
</dbReference>
<dbReference type="HAMAP" id="MF_00022">
    <property type="entry name" value="Glu_tRNA_synth_type1"/>
    <property type="match status" value="1"/>
</dbReference>
<dbReference type="InterPro" id="IPR045462">
    <property type="entry name" value="aa-tRNA-synth_I_cd-bd"/>
</dbReference>
<dbReference type="InterPro" id="IPR020751">
    <property type="entry name" value="aa-tRNA-synth_I_codon-bd_sub2"/>
</dbReference>
<dbReference type="InterPro" id="IPR001412">
    <property type="entry name" value="aa-tRNA-synth_I_CS"/>
</dbReference>
<dbReference type="InterPro" id="IPR008925">
    <property type="entry name" value="aa_tRNA-synth_I_cd-bd_sf"/>
</dbReference>
<dbReference type="InterPro" id="IPR004527">
    <property type="entry name" value="Glu-tRNA-ligase_bac/mito"/>
</dbReference>
<dbReference type="InterPro" id="IPR000924">
    <property type="entry name" value="Glu/Gln-tRNA-synth"/>
</dbReference>
<dbReference type="InterPro" id="IPR020058">
    <property type="entry name" value="Glu/Gln-tRNA-synth_Ib_cat-dom"/>
</dbReference>
<dbReference type="InterPro" id="IPR049940">
    <property type="entry name" value="GluQ/Sye"/>
</dbReference>
<dbReference type="InterPro" id="IPR014729">
    <property type="entry name" value="Rossmann-like_a/b/a_fold"/>
</dbReference>
<dbReference type="NCBIfam" id="TIGR00464">
    <property type="entry name" value="gltX_bact"/>
    <property type="match status" value="1"/>
</dbReference>
<dbReference type="PANTHER" id="PTHR43311">
    <property type="entry name" value="GLUTAMATE--TRNA LIGASE"/>
    <property type="match status" value="1"/>
</dbReference>
<dbReference type="PANTHER" id="PTHR43311:SF2">
    <property type="entry name" value="GLUTAMATE--TRNA LIGASE, MITOCHONDRIAL-RELATED"/>
    <property type="match status" value="1"/>
</dbReference>
<dbReference type="Pfam" id="PF19269">
    <property type="entry name" value="Anticodon_2"/>
    <property type="match status" value="1"/>
</dbReference>
<dbReference type="Pfam" id="PF00749">
    <property type="entry name" value="tRNA-synt_1c"/>
    <property type="match status" value="1"/>
</dbReference>
<dbReference type="PRINTS" id="PR00987">
    <property type="entry name" value="TRNASYNTHGLU"/>
</dbReference>
<dbReference type="SUPFAM" id="SSF48163">
    <property type="entry name" value="An anticodon-binding domain of class I aminoacyl-tRNA synthetases"/>
    <property type="match status" value="1"/>
</dbReference>
<dbReference type="SUPFAM" id="SSF52374">
    <property type="entry name" value="Nucleotidylyl transferase"/>
    <property type="match status" value="1"/>
</dbReference>
<dbReference type="PROSITE" id="PS00178">
    <property type="entry name" value="AA_TRNA_LIGASE_I"/>
    <property type="match status" value="1"/>
</dbReference>
<name>SYE1_BARQU</name>
<sequence>MIKVRFAPSPTGYIHIGNIRIALFNWLYAQAHNGAFILRYDDTDVERSKQEYIDAIAADLEWLDIQPDEIYYQSKRFNRYDEVAEMLKQRGLLYPCYETAEELDRRRKIQLSRKLPPVYDRAALKLTPEEKEEFESQGRKPHWRFLLPNFENNPLQTKRTEVCWNDVVKGKQTIDLASLSDPVLIREGGSYLYTLPSVVDDIDMAITHIIRGDDHITNTGVQIALFEALNAQLPIFGHINLLTTVLGKGLSKRDNDLSIHSLRAEGFESIAIQCFAVLIGTSQNVHPYPHQAALLKHFNLQDTSRSVTKFDIADLFALNSHLVHDLTYEEVKTRLKNLSIDGEKAECFWNAIRSNIDKVNDAVLWWKMIHDEQSFDPVALEDRSFVRQSLNFLPEGPLNDESWKVWTTTLKEKTGRRGKALFMPLRQALTGMDHGPEMGKLLQLLGREKVIDRLTIQGE</sequence>
<keyword id="KW-0030">Aminoacyl-tRNA synthetase</keyword>
<keyword id="KW-0067">ATP-binding</keyword>
<keyword id="KW-0963">Cytoplasm</keyword>
<keyword id="KW-0436">Ligase</keyword>
<keyword id="KW-0547">Nucleotide-binding</keyword>
<keyword id="KW-0648">Protein biosynthesis</keyword>
<organism>
    <name type="scientific">Bartonella quintana (strain Toulouse)</name>
    <name type="common">Rochalimaea quintana</name>
    <dbReference type="NCBI Taxonomy" id="283165"/>
    <lineage>
        <taxon>Bacteria</taxon>
        <taxon>Pseudomonadati</taxon>
        <taxon>Pseudomonadota</taxon>
        <taxon>Alphaproteobacteria</taxon>
        <taxon>Hyphomicrobiales</taxon>
        <taxon>Bartonellaceae</taxon>
        <taxon>Bartonella</taxon>
    </lineage>
</organism>
<protein>
    <recommendedName>
        <fullName evidence="1">Glutamate--tRNA ligase 1</fullName>
        <ecNumber evidence="1">6.1.1.17</ecNumber>
    </recommendedName>
    <alternativeName>
        <fullName evidence="1">Glutamyl-tRNA synthetase 1</fullName>
        <shortName evidence="1">GluRS 1</shortName>
    </alternativeName>
</protein>
<gene>
    <name evidence="1" type="primary">gltX1</name>
    <name type="ordered locus">BQ06770</name>
</gene>